<dbReference type="EC" id="2.4.2.7" evidence="1"/>
<dbReference type="EMBL" id="BX640435">
    <property type="protein sequence ID" value="CAE39303.1"/>
    <property type="molecule type" value="Genomic_DNA"/>
</dbReference>
<dbReference type="SMR" id="Q7W3L2"/>
<dbReference type="KEGG" id="bpa:BPP4020"/>
<dbReference type="HOGENOM" id="CLU_063339_3_0_4"/>
<dbReference type="UniPathway" id="UPA00588">
    <property type="reaction ID" value="UER00646"/>
</dbReference>
<dbReference type="Proteomes" id="UP000001421">
    <property type="component" value="Chromosome"/>
</dbReference>
<dbReference type="GO" id="GO:0005737">
    <property type="term" value="C:cytoplasm"/>
    <property type="evidence" value="ECO:0007669"/>
    <property type="project" value="UniProtKB-SubCell"/>
</dbReference>
<dbReference type="GO" id="GO:0002055">
    <property type="term" value="F:adenine binding"/>
    <property type="evidence" value="ECO:0007669"/>
    <property type="project" value="TreeGrafter"/>
</dbReference>
<dbReference type="GO" id="GO:0003999">
    <property type="term" value="F:adenine phosphoribosyltransferase activity"/>
    <property type="evidence" value="ECO:0007669"/>
    <property type="project" value="UniProtKB-UniRule"/>
</dbReference>
<dbReference type="GO" id="GO:0016208">
    <property type="term" value="F:AMP binding"/>
    <property type="evidence" value="ECO:0007669"/>
    <property type="project" value="TreeGrafter"/>
</dbReference>
<dbReference type="GO" id="GO:0006168">
    <property type="term" value="P:adenine salvage"/>
    <property type="evidence" value="ECO:0007669"/>
    <property type="project" value="InterPro"/>
</dbReference>
<dbReference type="GO" id="GO:0044209">
    <property type="term" value="P:AMP salvage"/>
    <property type="evidence" value="ECO:0007669"/>
    <property type="project" value="UniProtKB-UniRule"/>
</dbReference>
<dbReference type="GO" id="GO:0006166">
    <property type="term" value="P:purine ribonucleoside salvage"/>
    <property type="evidence" value="ECO:0007669"/>
    <property type="project" value="UniProtKB-KW"/>
</dbReference>
<dbReference type="CDD" id="cd06223">
    <property type="entry name" value="PRTases_typeI"/>
    <property type="match status" value="1"/>
</dbReference>
<dbReference type="FunFam" id="3.40.50.2020:FF:000021">
    <property type="entry name" value="Adenine phosphoribosyltransferase"/>
    <property type="match status" value="1"/>
</dbReference>
<dbReference type="Gene3D" id="3.40.50.2020">
    <property type="match status" value="1"/>
</dbReference>
<dbReference type="HAMAP" id="MF_00004">
    <property type="entry name" value="Aden_phosphoribosyltr"/>
    <property type="match status" value="1"/>
</dbReference>
<dbReference type="InterPro" id="IPR005764">
    <property type="entry name" value="Ade_phspho_trans"/>
</dbReference>
<dbReference type="InterPro" id="IPR000836">
    <property type="entry name" value="PRibTrfase_dom"/>
</dbReference>
<dbReference type="InterPro" id="IPR029057">
    <property type="entry name" value="PRTase-like"/>
</dbReference>
<dbReference type="InterPro" id="IPR050054">
    <property type="entry name" value="UPRTase/APRTase"/>
</dbReference>
<dbReference type="NCBIfam" id="TIGR01090">
    <property type="entry name" value="apt"/>
    <property type="match status" value="1"/>
</dbReference>
<dbReference type="NCBIfam" id="NF002634">
    <property type="entry name" value="PRK02304.1-3"/>
    <property type="match status" value="1"/>
</dbReference>
<dbReference type="NCBIfam" id="NF002636">
    <property type="entry name" value="PRK02304.1-5"/>
    <property type="match status" value="1"/>
</dbReference>
<dbReference type="PANTHER" id="PTHR32315">
    <property type="entry name" value="ADENINE PHOSPHORIBOSYLTRANSFERASE"/>
    <property type="match status" value="1"/>
</dbReference>
<dbReference type="PANTHER" id="PTHR32315:SF3">
    <property type="entry name" value="ADENINE PHOSPHORIBOSYLTRANSFERASE"/>
    <property type="match status" value="1"/>
</dbReference>
<dbReference type="Pfam" id="PF00156">
    <property type="entry name" value="Pribosyltran"/>
    <property type="match status" value="1"/>
</dbReference>
<dbReference type="SUPFAM" id="SSF53271">
    <property type="entry name" value="PRTase-like"/>
    <property type="match status" value="1"/>
</dbReference>
<dbReference type="PROSITE" id="PS00103">
    <property type="entry name" value="PUR_PYR_PR_TRANSFER"/>
    <property type="match status" value="1"/>
</dbReference>
<sequence length="191" mass="21136">MLLFPGTFTMQTDYAELVRRTIRSVPDWPTPGVTFRDITPVLQDPRTFRVLIDLFVYRYMRQRLDLVAGVDARGFIVGAVLAHELNLGFVPVRKKGKLPYRTVAEEYSLEYGNAAVEMHTDSVRTGQRVLLVDDLIATGGTMLAAIKLLQRLGANVVEAAAIIDLPYLGGSAQITATGTPLYTVCQYQEGD</sequence>
<comment type="function">
    <text evidence="1">Catalyzes a salvage reaction resulting in the formation of AMP, that is energically less costly than de novo synthesis.</text>
</comment>
<comment type="catalytic activity">
    <reaction evidence="1">
        <text>AMP + diphosphate = 5-phospho-alpha-D-ribose 1-diphosphate + adenine</text>
        <dbReference type="Rhea" id="RHEA:16609"/>
        <dbReference type="ChEBI" id="CHEBI:16708"/>
        <dbReference type="ChEBI" id="CHEBI:33019"/>
        <dbReference type="ChEBI" id="CHEBI:58017"/>
        <dbReference type="ChEBI" id="CHEBI:456215"/>
        <dbReference type="EC" id="2.4.2.7"/>
    </reaction>
</comment>
<comment type="pathway">
    <text evidence="1">Purine metabolism; AMP biosynthesis via salvage pathway; AMP from adenine: step 1/1.</text>
</comment>
<comment type="subunit">
    <text evidence="1">Homodimer.</text>
</comment>
<comment type="subcellular location">
    <subcellularLocation>
        <location evidence="1">Cytoplasm</location>
    </subcellularLocation>
</comment>
<comment type="similarity">
    <text evidence="1">Belongs to the purine/pyrimidine phosphoribosyltransferase family.</text>
</comment>
<accession>Q7W3L2</accession>
<protein>
    <recommendedName>
        <fullName evidence="1">Adenine phosphoribosyltransferase</fullName>
        <shortName evidence="1">APRT</shortName>
        <ecNumber evidence="1">2.4.2.7</ecNumber>
    </recommendedName>
</protein>
<gene>
    <name evidence="1" type="primary">apt</name>
    <name type="ordered locus">BPP4020</name>
</gene>
<organism>
    <name type="scientific">Bordetella parapertussis (strain 12822 / ATCC BAA-587 / NCTC 13253)</name>
    <dbReference type="NCBI Taxonomy" id="257311"/>
    <lineage>
        <taxon>Bacteria</taxon>
        <taxon>Pseudomonadati</taxon>
        <taxon>Pseudomonadota</taxon>
        <taxon>Betaproteobacteria</taxon>
        <taxon>Burkholderiales</taxon>
        <taxon>Alcaligenaceae</taxon>
        <taxon>Bordetella</taxon>
    </lineage>
</organism>
<reference key="1">
    <citation type="journal article" date="2003" name="Nat. Genet.">
        <title>Comparative analysis of the genome sequences of Bordetella pertussis, Bordetella parapertussis and Bordetella bronchiseptica.</title>
        <authorList>
            <person name="Parkhill J."/>
            <person name="Sebaihia M."/>
            <person name="Preston A."/>
            <person name="Murphy L.D."/>
            <person name="Thomson N.R."/>
            <person name="Harris D.E."/>
            <person name="Holden M.T.G."/>
            <person name="Churcher C.M."/>
            <person name="Bentley S.D."/>
            <person name="Mungall K.L."/>
            <person name="Cerdeno-Tarraga A.-M."/>
            <person name="Temple L."/>
            <person name="James K.D."/>
            <person name="Harris B."/>
            <person name="Quail M.A."/>
            <person name="Achtman M."/>
            <person name="Atkin R."/>
            <person name="Baker S."/>
            <person name="Basham D."/>
            <person name="Bason N."/>
            <person name="Cherevach I."/>
            <person name="Chillingworth T."/>
            <person name="Collins M."/>
            <person name="Cronin A."/>
            <person name="Davis P."/>
            <person name="Doggett J."/>
            <person name="Feltwell T."/>
            <person name="Goble A."/>
            <person name="Hamlin N."/>
            <person name="Hauser H."/>
            <person name="Holroyd S."/>
            <person name="Jagels K."/>
            <person name="Leather S."/>
            <person name="Moule S."/>
            <person name="Norberczak H."/>
            <person name="O'Neil S."/>
            <person name="Ormond D."/>
            <person name="Price C."/>
            <person name="Rabbinowitsch E."/>
            <person name="Rutter S."/>
            <person name="Sanders M."/>
            <person name="Saunders D."/>
            <person name="Seeger K."/>
            <person name="Sharp S."/>
            <person name="Simmonds M."/>
            <person name="Skelton J."/>
            <person name="Squares R."/>
            <person name="Squares S."/>
            <person name="Stevens K."/>
            <person name="Unwin L."/>
            <person name="Whitehead S."/>
            <person name="Barrell B.G."/>
            <person name="Maskell D.J."/>
        </authorList>
    </citation>
    <scope>NUCLEOTIDE SEQUENCE [LARGE SCALE GENOMIC DNA]</scope>
    <source>
        <strain>12822 / ATCC BAA-587 / NCTC 13253</strain>
    </source>
</reference>
<proteinExistence type="inferred from homology"/>
<keyword id="KW-0963">Cytoplasm</keyword>
<keyword id="KW-0328">Glycosyltransferase</keyword>
<keyword id="KW-0660">Purine salvage</keyword>
<keyword id="KW-0808">Transferase</keyword>
<name>APT_BORPA</name>
<feature type="chain" id="PRO_0000149361" description="Adenine phosphoribosyltransferase">
    <location>
        <begin position="1"/>
        <end position="191"/>
    </location>
</feature>
<evidence type="ECO:0000255" key="1">
    <source>
        <dbReference type="HAMAP-Rule" id="MF_00004"/>
    </source>
</evidence>